<feature type="chain" id="PRO_0000230311" description="Zinc finger protein 14">
    <location>
        <begin position="1"/>
        <end position="642"/>
    </location>
</feature>
<feature type="domain" description="KRAB" evidence="2">
    <location>
        <begin position="4"/>
        <end position="76"/>
    </location>
</feature>
<feature type="zinc finger region" description="C2H2-type 1" evidence="1">
    <location>
        <begin position="103"/>
        <end position="125"/>
    </location>
</feature>
<feature type="zinc finger region" description="C2H2-type 2; degenerate" evidence="1">
    <location>
        <begin position="141"/>
        <end position="163"/>
    </location>
</feature>
<feature type="zinc finger region" description="C2H2-type 3" evidence="1">
    <location>
        <begin position="169"/>
        <end position="191"/>
    </location>
</feature>
<feature type="zinc finger region" description="C2H2-type 4; atypical" evidence="1">
    <location>
        <begin position="197"/>
        <end position="217"/>
    </location>
</feature>
<feature type="zinc finger region" description="C2H2-type 5" evidence="1">
    <location>
        <begin position="223"/>
        <end position="245"/>
    </location>
</feature>
<feature type="zinc finger region" description="C2H2-type 6" evidence="1">
    <location>
        <begin position="251"/>
        <end position="273"/>
    </location>
</feature>
<feature type="zinc finger region" description="C2H2-type 7" evidence="1">
    <location>
        <begin position="279"/>
        <end position="301"/>
    </location>
</feature>
<feature type="zinc finger region" description="C2H2-type 8" evidence="1">
    <location>
        <begin position="307"/>
        <end position="329"/>
    </location>
</feature>
<feature type="zinc finger region" description="C2H2-type 9" evidence="1">
    <location>
        <begin position="335"/>
        <end position="357"/>
    </location>
</feature>
<feature type="zinc finger region" description="C2H2-type 10" evidence="1">
    <location>
        <begin position="363"/>
        <end position="385"/>
    </location>
</feature>
<feature type="zinc finger region" description="C2H2-type 11" evidence="1">
    <location>
        <begin position="391"/>
        <end position="413"/>
    </location>
</feature>
<feature type="zinc finger region" description="C2H2-type 12" evidence="1">
    <location>
        <begin position="419"/>
        <end position="441"/>
    </location>
</feature>
<feature type="zinc finger region" description="C2H2-type 13" evidence="1">
    <location>
        <begin position="447"/>
        <end position="469"/>
    </location>
</feature>
<feature type="zinc finger region" description="C2H2-type 14" evidence="1">
    <location>
        <begin position="475"/>
        <end position="497"/>
    </location>
</feature>
<feature type="zinc finger region" description="C2H2-type 15" evidence="1">
    <location>
        <begin position="503"/>
        <end position="525"/>
    </location>
</feature>
<feature type="zinc finger region" description="C2H2-type 16" evidence="1">
    <location>
        <begin position="531"/>
        <end position="553"/>
    </location>
</feature>
<feature type="zinc finger region" description="C2H2-type 17" evidence="1">
    <location>
        <begin position="559"/>
        <end position="581"/>
    </location>
</feature>
<feature type="zinc finger region" description="C2H2-type 18" evidence="1">
    <location>
        <begin position="587"/>
        <end position="609"/>
    </location>
</feature>
<feature type="zinc finger region" description="C2H2-type 19" evidence="1">
    <location>
        <begin position="615"/>
        <end position="637"/>
    </location>
</feature>
<proteinExistence type="evidence at transcript level"/>
<dbReference type="EMBL" id="CR859439">
    <property type="protein sequence ID" value="CAH91610.1"/>
    <property type="molecule type" value="mRNA"/>
</dbReference>
<dbReference type="RefSeq" id="NP_001125950.1">
    <property type="nucleotide sequence ID" value="NM_001132478.1"/>
</dbReference>
<dbReference type="SMR" id="Q5R9F0"/>
<dbReference type="GeneID" id="100172885"/>
<dbReference type="KEGG" id="pon:100172885"/>
<dbReference type="CTD" id="7561"/>
<dbReference type="eggNOG" id="KOG1721">
    <property type="taxonomic scope" value="Eukaryota"/>
</dbReference>
<dbReference type="InParanoid" id="Q5R9F0"/>
<dbReference type="OrthoDB" id="3156061at2759"/>
<dbReference type="Proteomes" id="UP000001595">
    <property type="component" value="Unplaced"/>
</dbReference>
<dbReference type="GO" id="GO:0005634">
    <property type="term" value="C:nucleus"/>
    <property type="evidence" value="ECO:0007669"/>
    <property type="project" value="UniProtKB-SubCell"/>
</dbReference>
<dbReference type="GO" id="GO:0003677">
    <property type="term" value="F:DNA binding"/>
    <property type="evidence" value="ECO:0007669"/>
    <property type="project" value="UniProtKB-KW"/>
</dbReference>
<dbReference type="GO" id="GO:0008270">
    <property type="term" value="F:zinc ion binding"/>
    <property type="evidence" value="ECO:0007669"/>
    <property type="project" value="UniProtKB-KW"/>
</dbReference>
<dbReference type="GO" id="GO:0006355">
    <property type="term" value="P:regulation of DNA-templated transcription"/>
    <property type="evidence" value="ECO:0007669"/>
    <property type="project" value="InterPro"/>
</dbReference>
<dbReference type="CDD" id="cd07765">
    <property type="entry name" value="KRAB_A-box"/>
    <property type="match status" value="1"/>
</dbReference>
<dbReference type="FunFam" id="3.30.160.60:FF:000838">
    <property type="entry name" value="Zinc finger protein 14"/>
    <property type="match status" value="6"/>
</dbReference>
<dbReference type="FunFam" id="3.30.160.60:FF:001223">
    <property type="entry name" value="Zinc finger protein 14"/>
    <property type="match status" value="3"/>
</dbReference>
<dbReference type="FunFam" id="3.30.160.60:FF:002518">
    <property type="entry name" value="Zinc finger protein 14"/>
    <property type="match status" value="1"/>
</dbReference>
<dbReference type="FunFam" id="3.30.160.60:FF:000184">
    <property type="entry name" value="Zinc finger protein 333"/>
    <property type="match status" value="2"/>
</dbReference>
<dbReference type="FunFam" id="3.30.160.60:FF:001602">
    <property type="entry name" value="Zinc finger protein 490"/>
    <property type="match status" value="1"/>
</dbReference>
<dbReference type="FunFam" id="3.30.160.60:FF:000371">
    <property type="entry name" value="Zinc finger protein 555"/>
    <property type="match status" value="1"/>
</dbReference>
<dbReference type="FunFam" id="3.30.160.60:FF:000156">
    <property type="entry name" value="Zinc finger protein 568"/>
    <property type="match status" value="3"/>
</dbReference>
<dbReference type="FunFam" id="3.30.160.60:FF:000271">
    <property type="entry name" value="Zinc finger protein 662"/>
    <property type="match status" value="1"/>
</dbReference>
<dbReference type="Gene3D" id="6.10.140.140">
    <property type="match status" value="1"/>
</dbReference>
<dbReference type="Gene3D" id="3.30.160.60">
    <property type="entry name" value="Classic Zinc Finger"/>
    <property type="match status" value="18"/>
</dbReference>
<dbReference type="InterPro" id="IPR001909">
    <property type="entry name" value="KRAB"/>
</dbReference>
<dbReference type="InterPro" id="IPR036051">
    <property type="entry name" value="KRAB_dom_sf"/>
</dbReference>
<dbReference type="InterPro" id="IPR050826">
    <property type="entry name" value="Krueppel_C2H2_ZnFinger"/>
</dbReference>
<dbReference type="InterPro" id="IPR036236">
    <property type="entry name" value="Znf_C2H2_sf"/>
</dbReference>
<dbReference type="InterPro" id="IPR013087">
    <property type="entry name" value="Znf_C2H2_type"/>
</dbReference>
<dbReference type="PANTHER" id="PTHR24377">
    <property type="entry name" value="IP01015P-RELATED"/>
    <property type="match status" value="1"/>
</dbReference>
<dbReference type="Pfam" id="PF01352">
    <property type="entry name" value="KRAB"/>
    <property type="match status" value="1"/>
</dbReference>
<dbReference type="Pfam" id="PF00096">
    <property type="entry name" value="zf-C2H2"/>
    <property type="match status" value="14"/>
</dbReference>
<dbReference type="Pfam" id="PF13912">
    <property type="entry name" value="zf-C2H2_6"/>
    <property type="match status" value="1"/>
</dbReference>
<dbReference type="SMART" id="SM00349">
    <property type="entry name" value="KRAB"/>
    <property type="match status" value="1"/>
</dbReference>
<dbReference type="SMART" id="SM00355">
    <property type="entry name" value="ZnF_C2H2"/>
    <property type="match status" value="18"/>
</dbReference>
<dbReference type="SUPFAM" id="SSF57667">
    <property type="entry name" value="beta-beta-alpha zinc fingers"/>
    <property type="match status" value="10"/>
</dbReference>
<dbReference type="SUPFAM" id="SSF109640">
    <property type="entry name" value="KRAB domain (Kruppel-associated box)"/>
    <property type="match status" value="1"/>
</dbReference>
<dbReference type="PROSITE" id="PS50805">
    <property type="entry name" value="KRAB"/>
    <property type="match status" value="1"/>
</dbReference>
<dbReference type="PROSITE" id="PS00028">
    <property type="entry name" value="ZINC_FINGER_C2H2_1"/>
    <property type="match status" value="17"/>
</dbReference>
<dbReference type="PROSITE" id="PS50157">
    <property type="entry name" value="ZINC_FINGER_C2H2_2"/>
    <property type="match status" value="18"/>
</dbReference>
<organism>
    <name type="scientific">Pongo abelii</name>
    <name type="common">Sumatran orangutan</name>
    <name type="synonym">Pongo pygmaeus abelii</name>
    <dbReference type="NCBI Taxonomy" id="9601"/>
    <lineage>
        <taxon>Eukaryota</taxon>
        <taxon>Metazoa</taxon>
        <taxon>Chordata</taxon>
        <taxon>Craniata</taxon>
        <taxon>Vertebrata</taxon>
        <taxon>Euteleostomi</taxon>
        <taxon>Mammalia</taxon>
        <taxon>Eutheria</taxon>
        <taxon>Euarchontoglires</taxon>
        <taxon>Primates</taxon>
        <taxon>Haplorrhini</taxon>
        <taxon>Catarrhini</taxon>
        <taxon>Hominidae</taxon>
        <taxon>Pongo</taxon>
    </lineage>
</organism>
<evidence type="ECO:0000255" key="1">
    <source>
        <dbReference type="PROSITE-ProRule" id="PRU00042"/>
    </source>
</evidence>
<evidence type="ECO:0000255" key="2">
    <source>
        <dbReference type="PROSITE-ProRule" id="PRU00119"/>
    </source>
</evidence>
<evidence type="ECO:0000305" key="3"/>
<comment type="function">
    <text>May be involved in transcriptional regulation.</text>
</comment>
<comment type="subcellular location">
    <subcellularLocation>
        <location evidence="3">Nucleus</location>
    </subcellularLocation>
</comment>
<comment type="similarity">
    <text evidence="3">Belongs to the krueppel C2H2-type zinc-finger protein family.</text>
</comment>
<name>ZNF14_PONAB</name>
<keyword id="KW-0238">DNA-binding</keyword>
<keyword id="KW-0479">Metal-binding</keyword>
<keyword id="KW-0539">Nucleus</keyword>
<keyword id="KW-1185">Reference proteome</keyword>
<keyword id="KW-0677">Repeat</keyword>
<keyword id="KW-0804">Transcription</keyword>
<keyword id="KW-0805">Transcription regulation</keyword>
<keyword id="KW-0862">Zinc</keyword>
<keyword id="KW-0863">Zinc-finger</keyword>
<sequence length="642" mass="75561">MDSVSFEDVAVNFTLEEWALLDSSQKKLYEDVMQETFKNLVCLGKKWEDQDIEDDHRNQGRNRRCHMVERLCESRKGSKCGETTSQMPNVNINKETFTGAKPHECSFCGRDFMHHSSLNRHMRSHTGQKPNEYQECEKQPRKHKAVEKTFSYHHCFRKHERTHTRVKPYECKQCGKAFIYYQPFQRHERTHAGEKPYECKQCGKTFIYYQSFQQHAHTGKKPYECKQCGKAFICYQSFQRHERTHTGEKPYECKQCGKAFSCPTYFRTHERTHTGEKPYKCKECGKAFSFLSSFRRHKRTHSGEKPYECKECGKAFFYSASFRAHVITHTGARPYKCKECGKAFNSSNSCRVHERTHIGEKPYECKQCGKSFSWSISLRLHERTHTGEKPYECKQCHKTFSFSSSLREHETTHTGEKPYECKQCGKTFSFSSSLQRHERTHNAEKPYECKQCGKAFRCSSYFRIHERSHTGEKPYECKQCGKVFIRSSSFRLHERTHTGEKPYECKLCSKTFSFSSSLREHEKIHTGNKPFECKQCGKAFLRSSQIRLHERTHTGEKPYQCKQCGKAFISSSKFRMHERTHTGEKPYRCKQCGKAFRFSSSVRIHERSHTGEKPYECKQCGKAFISSSHFRLHERTHMGEKV</sequence>
<gene>
    <name type="primary">ZNF14</name>
</gene>
<reference key="1">
    <citation type="submission" date="2004-11" db="EMBL/GenBank/DDBJ databases">
        <authorList>
            <consortium name="The German cDNA consortium"/>
        </authorList>
    </citation>
    <scope>NUCLEOTIDE SEQUENCE [LARGE SCALE MRNA]</scope>
    <source>
        <tissue>Kidney</tissue>
    </source>
</reference>
<accession>Q5R9F0</accession>
<protein>
    <recommendedName>
        <fullName>Zinc finger protein 14</fullName>
    </recommendedName>
</protein>